<accession>B9MKY6</accession>
<dbReference type="EC" id="2.7.8.7" evidence="1"/>
<dbReference type="EMBL" id="CP001393">
    <property type="protein sequence ID" value="ACM60994.1"/>
    <property type="molecule type" value="Genomic_DNA"/>
</dbReference>
<dbReference type="RefSeq" id="WP_015908288.1">
    <property type="nucleotide sequence ID" value="NC_012034.1"/>
</dbReference>
<dbReference type="SMR" id="B9MKY6"/>
<dbReference type="STRING" id="521460.Athe_1906"/>
<dbReference type="GeneID" id="31773256"/>
<dbReference type="KEGG" id="ate:Athe_1906"/>
<dbReference type="eggNOG" id="COG0736">
    <property type="taxonomic scope" value="Bacteria"/>
</dbReference>
<dbReference type="HOGENOM" id="CLU_089696_0_2_9"/>
<dbReference type="Proteomes" id="UP000007723">
    <property type="component" value="Chromosome"/>
</dbReference>
<dbReference type="GO" id="GO:0005737">
    <property type="term" value="C:cytoplasm"/>
    <property type="evidence" value="ECO:0007669"/>
    <property type="project" value="UniProtKB-SubCell"/>
</dbReference>
<dbReference type="GO" id="GO:0008897">
    <property type="term" value="F:holo-[acyl-carrier-protein] synthase activity"/>
    <property type="evidence" value="ECO:0007669"/>
    <property type="project" value="UniProtKB-UniRule"/>
</dbReference>
<dbReference type="GO" id="GO:0000287">
    <property type="term" value="F:magnesium ion binding"/>
    <property type="evidence" value="ECO:0007669"/>
    <property type="project" value="UniProtKB-UniRule"/>
</dbReference>
<dbReference type="GO" id="GO:0006633">
    <property type="term" value="P:fatty acid biosynthetic process"/>
    <property type="evidence" value="ECO:0007669"/>
    <property type="project" value="UniProtKB-UniRule"/>
</dbReference>
<dbReference type="Gene3D" id="3.90.470.20">
    <property type="entry name" value="4'-phosphopantetheinyl transferase domain"/>
    <property type="match status" value="1"/>
</dbReference>
<dbReference type="HAMAP" id="MF_00101">
    <property type="entry name" value="AcpS"/>
    <property type="match status" value="1"/>
</dbReference>
<dbReference type="InterPro" id="IPR008278">
    <property type="entry name" value="4-PPantetheinyl_Trfase_dom"/>
</dbReference>
<dbReference type="InterPro" id="IPR037143">
    <property type="entry name" value="4-PPantetheinyl_Trfase_dom_sf"/>
</dbReference>
<dbReference type="InterPro" id="IPR002582">
    <property type="entry name" value="ACPS"/>
</dbReference>
<dbReference type="InterPro" id="IPR004568">
    <property type="entry name" value="Ppantetheine-prot_Trfase_dom"/>
</dbReference>
<dbReference type="NCBIfam" id="TIGR00516">
    <property type="entry name" value="acpS"/>
    <property type="match status" value="1"/>
</dbReference>
<dbReference type="NCBIfam" id="TIGR00556">
    <property type="entry name" value="pantethn_trn"/>
    <property type="match status" value="1"/>
</dbReference>
<dbReference type="Pfam" id="PF01648">
    <property type="entry name" value="ACPS"/>
    <property type="match status" value="1"/>
</dbReference>
<dbReference type="SUPFAM" id="SSF56214">
    <property type="entry name" value="4'-phosphopantetheinyl transferase"/>
    <property type="match status" value="1"/>
</dbReference>
<keyword id="KW-0963">Cytoplasm</keyword>
<keyword id="KW-0275">Fatty acid biosynthesis</keyword>
<keyword id="KW-0276">Fatty acid metabolism</keyword>
<keyword id="KW-0444">Lipid biosynthesis</keyword>
<keyword id="KW-0443">Lipid metabolism</keyword>
<keyword id="KW-0460">Magnesium</keyword>
<keyword id="KW-0479">Metal-binding</keyword>
<keyword id="KW-0808">Transferase</keyword>
<gene>
    <name evidence="1" type="primary">acpS</name>
    <name type="ordered locus">Athe_1906</name>
</gene>
<organism>
    <name type="scientific">Caldicellulosiruptor bescii (strain ATCC BAA-1888 / DSM 6725 / KCTC 15123 / Z-1320)</name>
    <name type="common">Anaerocellum thermophilum</name>
    <dbReference type="NCBI Taxonomy" id="521460"/>
    <lineage>
        <taxon>Bacteria</taxon>
        <taxon>Bacillati</taxon>
        <taxon>Bacillota</taxon>
        <taxon>Bacillota incertae sedis</taxon>
        <taxon>Caldicellulosiruptorales</taxon>
        <taxon>Caldicellulosiruptoraceae</taxon>
        <taxon>Caldicellulosiruptor</taxon>
    </lineage>
</organism>
<name>ACPS_CALBD</name>
<comment type="function">
    <text evidence="1">Transfers the 4'-phosphopantetheine moiety from coenzyme A to a Ser of acyl-carrier-protein.</text>
</comment>
<comment type="catalytic activity">
    <reaction evidence="1">
        <text>apo-[ACP] + CoA = holo-[ACP] + adenosine 3',5'-bisphosphate + H(+)</text>
        <dbReference type="Rhea" id="RHEA:12068"/>
        <dbReference type="Rhea" id="RHEA-COMP:9685"/>
        <dbReference type="Rhea" id="RHEA-COMP:9690"/>
        <dbReference type="ChEBI" id="CHEBI:15378"/>
        <dbReference type="ChEBI" id="CHEBI:29999"/>
        <dbReference type="ChEBI" id="CHEBI:57287"/>
        <dbReference type="ChEBI" id="CHEBI:58343"/>
        <dbReference type="ChEBI" id="CHEBI:64479"/>
        <dbReference type="EC" id="2.7.8.7"/>
    </reaction>
</comment>
<comment type="cofactor">
    <cofactor evidence="1">
        <name>Mg(2+)</name>
        <dbReference type="ChEBI" id="CHEBI:18420"/>
    </cofactor>
</comment>
<comment type="subcellular location">
    <subcellularLocation>
        <location evidence="1">Cytoplasm</location>
    </subcellularLocation>
</comment>
<comment type="similarity">
    <text evidence="1">Belongs to the P-Pant transferase superfamily. AcpS family.</text>
</comment>
<evidence type="ECO:0000255" key="1">
    <source>
        <dbReference type="HAMAP-Rule" id="MF_00101"/>
    </source>
</evidence>
<proteinExistence type="inferred from homology"/>
<sequence length="121" mass="13663">MIFNIGIDVVEVDRFKDMKRFDEFLKRVFTSCELEYIKQKRYNPETIAGYFAAKEAVAKALSTGVVFCFKDIEIQKGKTGCPMVKLYNRAEALCFELGIKNIVVSISHQKSVAVAVAIAEK</sequence>
<reference key="1">
    <citation type="submission" date="2009-01" db="EMBL/GenBank/DDBJ databases">
        <title>Complete sequence of chromosome of Caldicellulosiruptor becscii DSM 6725.</title>
        <authorList>
            <person name="Lucas S."/>
            <person name="Copeland A."/>
            <person name="Lapidus A."/>
            <person name="Glavina del Rio T."/>
            <person name="Tice H."/>
            <person name="Bruce D."/>
            <person name="Goodwin L."/>
            <person name="Pitluck S."/>
            <person name="Sims D."/>
            <person name="Meincke L."/>
            <person name="Brettin T."/>
            <person name="Detter J.C."/>
            <person name="Han C."/>
            <person name="Larimer F."/>
            <person name="Land M."/>
            <person name="Hauser L."/>
            <person name="Kyrpides N."/>
            <person name="Ovchinnikova G."/>
            <person name="Kataeva I."/>
            <person name="Adams M.W.W."/>
        </authorList>
    </citation>
    <scope>NUCLEOTIDE SEQUENCE [LARGE SCALE GENOMIC DNA]</scope>
    <source>
        <strain>ATCC BAA-1888 / DSM 6725 / KCTC 15123 / Z-1320</strain>
    </source>
</reference>
<feature type="chain" id="PRO_1000118788" description="Holo-[acyl-carrier-protein] synthase">
    <location>
        <begin position="1"/>
        <end position="121"/>
    </location>
</feature>
<feature type="binding site" evidence="1">
    <location>
        <position position="8"/>
    </location>
    <ligand>
        <name>Mg(2+)</name>
        <dbReference type="ChEBI" id="CHEBI:18420"/>
    </ligand>
</feature>
<feature type="binding site" evidence="1">
    <location>
        <position position="55"/>
    </location>
    <ligand>
        <name>Mg(2+)</name>
        <dbReference type="ChEBI" id="CHEBI:18420"/>
    </ligand>
</feature>
<protein>
    <recommendedName>
        <fullName evidence="1">Holo-[acyl-carrier-protein] synthase</fullName>
        <shortName evidence="1">Holo-ACP synthase</shortName>
        <ecNumber evidence="1">2.7.8.7</ecNumber>
    </recommendedName>
    <alternativeName>
        <fullName evidence="1">4'-phosphopantetheinyl transferase AcpS</fullName>
    </alternativeName>
</protein>